<protein>
    <recommendedName>
        <fullName>Penicillin-binding protein 1A</fullName>
        <shortName>PBP-1a</shortName>
        <shortName>PBP1a</shortName>
    </recommendedName>
    <domain>
        <recommendedName>
            <fullName>Penicillin-insensitive transglycosylase</fullName>
            <ecNumber evidence="2">2.4.99.28</ecNumber>
        </recommendedName>
        <alternativeName>
            <fullName>Peptidoglycan TGase</fullName>
        </alternativeName>
    </domain>
    <domain>
        <recommendedName>
            <fullName>Penicillin-sensitive transpeptidase</fullName>
            <ecNumber evidence="2">3.4.16.4</ecNumber>
        </recommendedName>
        <alternativeName>
            <fullName>DD-transpeptidase</fullName>
        </alternativeName>
    </domain>
</protein>
<organism>
    <name type="scientific">Neisseria gonorrhoeae</name>
    <dbReference type="NCBI Taxonomy" id="485"/>
    <lineage>
        <taxon>Bacteria</taxon>
        <taxon>Pseudomonadati</taxon>
        <taxon>Pseudomonadota</taxon>
        <taxon>Betaproteobacteria</taxon>
        <taxon>Neisseriales</taxon>
        <taxon>Neisseriaceae</taxon>
        <taxon>Neisseria</taxon>
    </lineage>
</organism>
<keyword id="KW-0046">Antibiotic resistance</keyword>
<keyword id="KW-0121">Carboxypeptidase</keyword>
<keyword id="KW-0997">Cell inner membrane</keyword>
<keyword id="KW-1003">Cell membrane</keyword>
<keyword id="KW-0133">Cell shape</keyword>
<keyword id="KW-0961">Cell wall biogenesis/degradation</keyword>
<keyword id="KW-0903">Direct protein sequencing</keyword>
<keyword id="KW-0328">Glycosyltransferase</keyword>
<keyword id="KW-0378">Hydrolase</keyword>
<keyword id="KW-0472">Membrane</keyword>
<keyword id="KW-0511">Multifunctional enzyme</keyword>
<keyword id="KW-0573">Peptidoglycan synthesis</keyword>
<keyword id="KW-0645">Protease</keyword>
<keyword id="KW-0735">Signal-anchor</keyword>
<keyword id="KW-0808">Transferase</keyword>
<keyword id="KW-0812">Transmembrane</keyword>
<keyword id="KW-1133">Transmembrane helix</keyword>
<dbReference type="EC" id="2.4.99.28" evidence="2"/>
<dbReference type="EC" id="3.4.16.4" evidence="2"/>
<dbReference type="EMBL" id="U72876">
    <property type="protein sequence ID" value="AAB52536.1"/>
    <property type="molecule type" value="Genomic_DNA"/>
</dbReference>
<dbReference type="RefSeq" id="WP_003687357.1">
    <property type="nucleotide sequence ID" value="NZ_WHPL01000002.1"/>
</dbReference>
<dbReference type="SMR" id="O05131"/>
<dbReference type="CAZy" id="GT51">
    <property type="family name" value="Glycosyltransferase Family 51"/>
</dbReference>
<dbReference type="UniPathway" id="UPA00219"/>
<dbReference type="GO" id="GO:0030288">
    <property type="term" value="C:outer membrane-bounded periplasmic space"/>
    <property type="evidence" value="ECO:0007669"/>
    <property type="project" value="TreeGrafter"/>
</dbReference>
<dbReference type="GO" id="GO:0005886">
    <property type="term" value="C:plasma membrane"/>
    <property type="evidence" value="ECO:0007669"/>
    <property type="project" value="UniProtKB-SubCell"/>
</dbReference>
<dbReference type="GO" id="GO:0008658">
    <property type="term" value="F:penicillin binding"/>
    <property type="evidence" value="ECO:0007669"/>
    <property type="project" value="InterPro"/>
</dbReference>
<dbReference type="GO" id="GO:0008955">
    <property type="term" value="F:peptidoglycan glycosyltransferase activity"/>
    <property type="evidence" value="ECO:0007669"/>
    <property type="project" value="RHEA"/>
</dbReference>
<dbReference type="GO" id="GO:0009002">
    <property type="term" value="F:serine-type D-Ala-D-Ala carboxypeptidase activity"/>
    <property type="evidence" value="ECO:0007669"/>
    <property type="project" value="UniProtKB-EC"/>
</dbReference>
<dbReference type="GO" id="GO:0071555">
    <property type="term" value="P:cell wall organization"/>
    <property type="evidence" value="ECO:0007669"/>
    <property type="project" value="UniProtKB-KW"/>
</dbReference>
<dbReference type="GO" id="GO:0009252">
    <property type="term" value="P:peptidoglycan biosynthetic process"/>
    <property type="evidence" value="ECO:0007669"/>
    <property type="project" value="UniProtKB-UniPathway"/>
</dbReference>
<dbReference type="GO" id="GO:0006508">
    <property type="term" value="P:proteolysis"/>
    <property type="evidence" value="ECO:0007669"/>
    <property type="project" value="UniProtKB-KW"/>
</dbReference>
<dbReference type="GO" id="GO:0008360">
    <property type="term" value="P:regulation of cell shape"/>
    <property type="evidence" value="ECO:0007669"/>
    <property type="project" value="UniProtKB-KW"/>
</dbReference>
<dbReference type="GO" id="GO:0046677">
    <property type="term" value="P:response to antibiotic"/>
    <property type="evidence" value="ECO:0007669"/>
    <property type="project" value="UniProtKB-KW"/>
</dbReference>
<dbReference type="FunFam" id="3.40.710.10:FF:000041">
    <property type="entry name" value="Penicillin-binding protein 1A"/>
    <property type="match status" value="1"/>
</dbReference>
<dbReference type="FunFam" id="1.10.3810.10:FF:000003">
    <property type="entry name" value="Penicillin-binding protein 1a"/>
    <property type="match status" value="1"/>
</dbReference>
<dbReference type="Gene3D" id="1.10.3810.10">
    <property type="entry name" value="Biosynthetic peptidoglycan transglycosylase-like"/>
    <property type="match status" value="1"/>
</dbReference>
<dbReference type="Gene3D" id="3.40.710.10">
    <property type="entry name" value="DD-peptidase/beta-lactamase superfamily"/>
    <property type="match status" value="2"/>
</dbReference>
<dbReference type="InterPro" id="IPR012338">
    <property type="entry name" value="Beta-lactam/transpept-like"/>
</dbReference>
<dbReference type="InterPro" id="IPR001264">
    <property type="entry name" value="Glyco_trans_51"/>
</dbReference>
<dbReference type="InterPro" id="IPR050396">
    <property type="entry name" value="Glycosyltr_51/Transpeptidase"/>
</dbReference>
<dbReference type="InterPro" id="IPR023346">
    <property type="entry name" value="Lysozyme-like_dom_sf"/>
</dbReference>
<dbReference type="InterPro" id="IPR036950">
    <property type="entry name" value="PBP_transglycosylase"/>
</dbReference>
<dbReference type="InterPro" id="IPR031376">
    <property type="entry name" value="PCB_OB"/>
</dbReference>
<dbReference type="InterPro" id="IPR001460">
    <property type="entry name" value="PCN-bd_Tpept"/>
</dbReference>
<dbReference type="NCBIfam" id="TIGR02074">
    <property type="entry name" value="PBP_1a_fam"/>
    <property type="match status" value="1"/>
</dbReference>
<dbReference type="PANTHER" id="PTHR32282">
    <property type="entry name" value="BINDING PROTEIN TRANSPEPTIDASE, PUTATIVE-RELATED"/>
    <property type="match status" value="1"/>
</dbReference>
<dbReference type="PANTHER" id="PTHR32282:SF27">
    <property type="entry name" value="PENICILLIN-BINDING PROTEIN 1A"/>
    <property type="match status" value="1"/>
</dbReference>
<dbReference type="Pfam" id="PF17092">
    <property type="entry name" value="PCB_OB"/>
    <property type="match status" value="1"/>
</dbReference>
<dbReference type="Pfam" id="PF00912">
    <property type="entry name" value="Transgly"/>
    <property type="match status" value="1"/>
</dbReference>
<dbReference type="Pfam" id="PF00905">
    <property type="entry name" value="Transpeptidase"/>
    <property type="match status" value="1"/>
</dbReference>
<dbReference type="SUPFAM" id="SSF56601">
    <property type="entry name" value="beta-lactamase/transpeptidase-like"/>
    <property type="match status" value="1"/>
</dbReference>
<dbReference type="SUPFAM" id="SSF53955">
    <property type="entry name" value="Lysozyme-like"/>
    <property type="match status" value="1"/>
</dbReference>
<reference key="1">
    <citation type="journal article" date="1997" name="J. Bacteriol.">
        <title>Cloning and characterization of the ponA gene encoding penicillin-binding protein 1 from Neisseria gonorrhoeae and Neisseria meningitidis.</title>
        <authorList>
            <person name="Ropp P.A."/>
            <person name="Nicholas R.A."/>
        </authorList>
    </citation>
    <scope>NUCLEOTIDE SEQUENCE [GENOMIC DNA]</scope>
    <scope>PROTEIN SEQUENCE OF 2-26</scope>
    <source>
        <strain>FA19</strain>
    </source>
</reference>
<accession>O05131</accession>
<evidence type="ECO:0000250" key="1"/>
<evidence type="ECO:0000250" key="2">
    <source>
        <dbReference type="UniProtKB" id="P02918"/>
    </source>
</evidence>
<evidence type="ECO:0000250" key="3">
    <source>
        <dbReference type="UniProtKB" id="P02919"/>
    </source>
</evidence>
<evidence type="ECO:0000255" key="4"/>
<evidence type="ECO:0000256" key="5">
    <source>
        <dbReference type="SAM" id="MobiDB-lite"/>
    </source>
</evidence>
<evidence type="ECO:0000269" key="6">
    <source>
    </source>
</evidence>
<evidence type="ECO:0000305" key="7"/>
<feature type="initiator methionine" description="Removed" evidence="6">
    <location>
        <position position="1"/>
    </location>
</feature>
<feature type="chain" id="PRO_0000083169" description="Penicillin-binding protein 1A">
    <location>
        <begin position="2"/>
        <end position="798"/>
    </location>
</feature>
<feature type="topological domain" description="Cytoplasmic" evidence="4">
    <location>
        <begin position="2"/>
        <end position="9"/>
    </location>
</feature>
<feature type="transmembrane region" description="Helical; Signal-anchor for type II membrane protein" evidence="4">
    <location>
        <begin position="10"/>
        <end position="30"/>
    </location>
</feature>
<feature type="topological domain" description="Periplasmic" evidence="4">
    <location>
        <begin position="31"/>
        <end position="798"/>
    </location>
</feature>
<feature type="region of interest" description="Transglycosylase">
    <location>
        <begin position="50"/>
        <end position="218"/>
    </location>
</feature>
<feature type="region of interest" description="Transpeptidase">
    <location>
        <begin position="378"/>
        <end position="700"/>
    </location>
</feature>
<feature type="region of interest" description="Disordered" evidence="5">
    <location>
        <begin position="739"/>
        <end position="798"/>
    </location>
</feature>
<feature type="compositionally biased region" description="Basic and acidic residues" evidence="5">
    <location>
        <begin position="766"/>
        <end position="777"/>
    </location>
</feature>
<feature type="compositionally biased region" description="Polar residues" evidence="5">
    <location>
        <begin position="783"/>
        <end position="798"/>
    </location>
</feature>
<feature type="active site" description="Proton donor; for transglycosylase activity" evidence="3">
    <location>
        <position position="88"/>
    </location>
</feature>
<feature type="active site" description="Acyl-ester intermediate; for transpeptidase activity" evidence="3">
    <location>
        <position position="461"/>
    </location>
</feature>
<comment type="function">
    <text evidence="1">Cell wall formation. Synthesis of cross-linked peptidoglycan from the lipid intermediates. The enzyme has a penicillin-insensitive transglycosylase N-terminal domain (formation of linear glycan strands) and a penicillin-sensitive transpeptidase C-terminal domain (cross-linking of the peptide subunits). Essential for cell wall synthesis.</text>
</comment>
<comment type="catalytic activity">
    <reaction evidence="2">
        <text>[GlcNAc-(1-&gt;4)-Mur2Ac(oyl-L-Ala-gamma-D-Glu-L-Lys-D-Ala-D-Ala)](n)-di-trans,octa-cis-undecaprenyl diphosphate + beta-D-GlcNAc-(1-&gt;4)-Mur2Ac(oyl-L-Ala-gamma-D-Glu-L-Lys-D-Ala-D-Ala)-di-trans,octa-cis-undecaprenyl diphosphate = [GlcNAc-(1-&gt;4)-Mur2Ac(oyl-L-Ala-gamma-D-Glu-L-Lys-D-Ala-D-Ala)](n+1)-di-trans,octa-cis-undecaprenyl diphosphate + di-trans,octa-cis-undecaprenyl diphosphate + H(+)</text>
        <dbReference type="Rhea" id="RHEA:23708"/>
        <dbReference type="Rhea" id="RHEA-COMP:9602"/>
        <dbReference type="Rhea" id="RHEA-COMP:9603"/>
        <dbReference type="ChEBI" id="CHEBI:15378"/>
        <dbReference type="ChEBI" id="CHEBI:58405"/>
        <dbReference type="ChEBI" id="CHEBI:60033"/>
        <dbReference type="ChEBI" id="CHEBI:78435"/>
        <dbReference type="EC" id="2.4.99.28"/>
    </reaction>
</comment>
<comment type="catalytic activity">
    <reaction evidence="2">
        <text>Preferential cleavage: (Ac)2-L-Lys-D-Ala-|-D-Ala. Also transpeptidation of peptidyl-alanyl moieties that are N-acyl substituents of D-alanine.</text>
        <dbReference type="EC" id="3.4.16.4"/>
    </reaction>
</comment>
<comment type="pathway">
    <text>Cell wall biogenesis; peptidoglycan biosynthesis.</text>
</comment>
<comment type="subcellular location">
    <subcellularLocation>
        <location evidence="1">Cell inner membrane</location>
        <topology evidence="1">Single-pass type II membrane protein</topology>
    </subcellularLocation>
</comment>
<comment type="similarity">
    <text evidence="7">In the N-terminal section; belongs to the glycosyltransferase 51 family.</text>
</comment>
<comment type="similarity">
    <text evidence="7">In the C-terminal section; belongs to the transpeptidase family.</text>
</comment>
<gene>
    <name type="primary">mrcA</name>
    <name type="synonym">ponA</name>
</gene>
<sequence length="798" mass="88495">MIKKILTTCFGLFFGFCVFGVGLVAIAILVTYPKLPSLDSLQHYQPKMPLTIYSADGEVIGMYGEQRREFTKIGDFPEVLRNAVIAAEDKRFYRHWGVDVWGVARAAVGNVVSGSVQSGASTITQQVAKNFYLSSEKTFTRKFNEVLLAYKIEQSLSKDKILELYFNQIYLGQRAYGFASAAQIYFNKNVRDLTLAEAAMLAGLPKAPSAYNPIVNPERAKLRQKYILNNMLEEKMITVQQRDQALNEELHYERFVRKIDQSALYVAEMVRRELYEKYGEDAYTQGFKVYTTVRTDHQKAATEALRKALRNFDRGSSYRGAENYIDLSKSEDVEETVSQYLSGLYTVDKMVPAVVLDVTKKKNVVIQLPGGRRVALDRRALGFAARAVDNEKMGEDRIRRGAVIRVKNNGGRWAVVQEPLLQGALVSLDAKTGAVRALVGGYDFHSKTFNRAVQAMRQPGSTFKPFVYSAALSKGMTASTVVNDAPISLPGKGPNGSVWTPKNSDGRYSGYITLRQALTASKNMVSIRILMSIGVGYAQQYIRRFGFRPSELPASLSMALGTGETTPLKVAEAYSVFANGGYRVSSHVIDKIYDRDGRLRAQMQPLVAGQNAPQAIDPRNAYIMYKIMQDVVRVGTARGAAALGRTDIAGKTGTTNDNKDAWFVGFNPDVVTAVYIGFDKPKSMGRAGYGGTIAVPVWVDYMRFALKGKQGKGMKMPEGVVSSNGEYYMKERMVTDPGLMLDNSGIAPQPSRRAKEDDEAAVENEQQGRSDETRQDVQETPVLPSNTDSKQQQLDSLF</sequence>
<name>PBPA_NEIGO</name>
<proteinExistence type="evidence at protein level"/>